<gene>
    <name evidence="1" type="primary">recO</name>
    <name type="ordered locus">Anae109_2462</name>
</gene>
<accession>A7HD67</accession>
<organism>
    <name type="scientific">Anaeromyxobacter sp. (strain Fw109-5)</name>
    <dbReference type="NCBI Taxonomy" id="404589"/>
    <lineage>
        <taxon>Bacteria</taxon>
        <taxon>Pseudomonadati</taxon>
        <taxon>Myxococcota</taxon>
        <taxon>Myxococcia</taxon>
        <taxon>Myxococcales</taxon>
        <taxon>Cystobacterineae</taxon>
        <taxon>Anaeromyxobacteraceae</taxon>
        <taxon>Anaeromyxobacter</taxon>
    </lineage>
</organism>
<name>RECO_ANADF</name>
<evidence type="ECO:0000255" key="1">
    <source>
        <dbReference type="HAMAP-Rule" id="MF_00201"/>
    </source>
</evidence>
<feature type="chain" id="PRO_0000325197" description="DNA repair protein RecO">
    <location>
        <begin position="1"/>
        <end position="256"/>
    </location>
</feature>
<reference key="1">
    <citation type="journal article" date="2015" name="Genome Announc.">
        <title>Complete genome sequence of Anaeromyxobacter sp. Fw109-5, an anaerobic, metal-reducing bacterium isolated from a contaminated subsurface environment.</title>
        <authorList>
            <person name="Hwang C."/>
            <person name="Copeland A."/>
            <person name="Lucas S."/>
            <person name="Lapidus A."/>
            <person name="Barry K."/>
            <person name="Glavina Del Rio T."/>
            <person name="Dalin E."/>
            <person name="Tice H."/>
            <person name="Pitluck S."/>
            <person name="Sims D."/>
            <person name="Brettin T."/>
            <person name="Bruce D.C."/>
            <person name="Detter J.C."/>
            <person name="Han C.S."/>
            <person name="Schmutz J."/>
            <person name="Larimer F.W."/>
            <person name="Land M.L."/>
            <person name="Hauser L.J."/>
            <person name="Kyrpides N."/>
            <person name="Lykidis A."/>
            <person name="Richardson P."/>
            <person name="Belieav A."/>
            <person name="Sanford R.A."/>
            <person name="Loeffler F.E."/>
            <person name="Fields M.W."/>
        </authorList>
    </citation>
    <scope>NUCLEOTIDE SEQUENCE [LARGE SCALE GENOMIC DNA]</scope>
    <source>
        <strain>Fw109-5</strain>
    </source>
</reference>
<keyword id="KW-0227">DNA damage</keyword>
<keyword id="KW-0233">DNA recombination</keyword>
<keyword id="KW-0234">DNA repair</keyword>
<keyword id="KW-1185">Reference proteome</keyword>
<dbReference type="EMBL" id="CP000769">
    <property type="protein sequence ID" value="ABS26663.1"/>
    <property type="molecule type" value="Genomic_DNA"/>
</dbReference>
<dbReference type="RefSeq" id="WP_012097251.1">
    <property type="nucleotide sequence ID" value="NC_009675.1"/>
</dbReference>
<dbReference type="SMR" id="A7HD67"/>
<dbReference type="STRING" id="404589.Anae109_2462"/>
<dbReference type="KEGG" id="afw:Anae109_2462"/>
<dbReference type="eggNOG" id="COG1381">
    <property type="taxonomic scope" value="Bacteria"/>
</dbReference>
<dbReference type="HOGENOM" id="CLU_066632_2_0_7"/>
<dbReference type="OrthoDB" id="9780797at2"/>
<dbReference type="Proteomes" id="UP000006382">
    <property type="component" value="Chromosome"/>
</dbReference>
<dbReference type="GO" id="GO:0043590">
    <property type="term" value="C:bacterial nucleoid"/>
    <property type="evidence" value="ECO:0007669"/>
    <property type="project" value="TreeGrafter"/>
</dbReference>
<dbReference type="GO" id="GO:0006310">
    <property type="term" value="P:DNA recombination"/>
    <property type="evidence" value="ECO:0007669"/>
    <property type="project" value="UniProtKB-UniRule"/>
</dbReference>
<dbReference type="GO" id="GO:0006302">
    <property type="term" value="P:double-strand break repair"/>
    <property type="evidence" value="ECO:0007669"/>
    <property type="project" value="TreeGrafter"/>
</dbReference>
<dbReference type="Gene3D" id="2.40.50.140">
    <property type="entry name" value="Nucleic acid-binding proteins"/>
    <property type="match status" value="1"/>
</dbReference>
<dbReference type="Gene3D" id="1.20.1440.120">
    <property type="entry name" value="Recombination protein O, C-terminal domain"/>
    <property type="match status" value="1"/>
</dbReference>
<dbReference type="HAMAP" id="MF_00201">
    <property type="entry name" value="RecO"/>
    <property type="match status" value="1"/>
</dbReference>
<dbReference type="InterPro" id="IPR037278">
    <property type="entry name" value="ARFGAP/RecO"/>
</dbReference>
<dbReference type="InterPro" id="IPR022572">
    <property type="entry name" value="DNA_rep/recomb_RecO_N"/>
</dbReference>
<dbReference type="InterPro" id="IPR012340">
    <property type="entry name" value="NA-bd_OB-fold"/>
</dbReference>
<dbReference type="InterPro" id="IPR003717">
    <property type="entry name" value="RecO"/>
</dbReference>
<dbReference type="InterPro" id="IPR042242">
    <property type="entry name" value="RecO_C"/>
</dbReference>
<dbReference type="NCBIfam" id="TIGR00613">
    <property type="entry name" value="reco"/>
    <property type="match status" value="1"/>
</dbReference>
<dbReference type="PANTHER" id="PTHR33991">
    <property type="entry name" value="DNA REPAIR PROTEIN RECO"/>
    <property type="match status" value="1"/>
</dbReference>
<dbReference type="PANTHER" id="PTHR33991:SF1">
    <property type="entry name" value="DNA REPAIR PROTEIN RECO"/>
    <property type="match status" value="1"/>
</dbReference>
<dbReference type="Pfam" id="PF02565">
    <property type="entry name" value="RecO_C"/>
    <property type="match status" value="1"/>
</dbReference>
<dbReference type="Pfam" id="PF11967">
    <property type="entry name" value="RecO_N"/>
    <property type="match status" value="1"/>
</dbReference>
<dbReference type="SUPFAM" id="SSF57863">
    <property type="entry name" value="ArfGap/RecO-like zinc finger"/>
    <property type="match status" value="1"/>
</dbReference>
<dbReference type="SUPFAM" id="SSF50249">
    <property type="entry name" value="Nucleic acid-binding proteins"/>
    <property type="match status" value="1"/>
</dbReference>
<comment type="function">
    <text evidence="1">Involved in DNA repair and RecF pathway recombination.</text>
</comment>
<comment type="similarity">
    <text evidence="1">Belongs to the RecO family.</text>
</comment>
<protein>
    <recommendedName>
        <fullName evidence="1">DNA repair protein RecO</fullName>
    </recommendedName>
    <alternativeName>
        <fullName evidence="1">Recombination protein O</fullName>
    </alternativeName>
</protein>
<sequence length="256" mass="26702">MTERLKLTGLVLRAVDYGESDRVVTLLTRERGKVSGFARGARASRRRFGGALEPFTLLVAEARERPGSDMLGLESVSVLRAHGGIRGELARIACAGYAAELSRELVRDHEPHAELLALLLEYLGALDAGPARPEGLRAFELGALRAAGLMPRVDACVACGGALGPEGRVRFDPGQGGVLCPPCAPAAAPGAPWVSIAAASALARLQAEGLAGASAALPPSVGREARDALAAFLEHHLGRRLAARRFLDEVGPLLGD</sequence>
<proteinExistence type="inferred from homology"/>